<sequence>MKTVSQLIDMKQKQTKISMVTAYDFPSAKQVEAAGIDMILVGDSLGMTVLGYESTVQVTLADMIHHGRAVRRGAPNTFVVVDMPIGAVGISMTQDLNHALKLYQETNANAIKAEGAHITPFIEKATAIGIPVVAHLGLTPQSVGVMGYKLQGATKEAAEQLILDAKNVEQAGAVALVLEAIPNDLAEEISKHLTIPVIGIGAGKGTDGQVLVYHDMLNYGVEHKAKFVKQFADFSVGVDGLKQYDQEVKSGAFPSEEYTYKKKIMNEVNNND</sequence>
<comment type="function">
    <text evidence="1">Catalyzes the reversible reaction in which hydroxymethyl group from 5,10-methylenetetrahydrofolate is transferred onto alpha-ketoisovalerate to form ketopantoate.</text>
</comment>
<comment type="catalytic activity">
    <reaction evidence="1">
        <text>3-methyl-2-oxobutanoate + (6R)-5,10-methylene-5,6,7,8-tetrahydrofolate + H2O = 2-dehydropantoate + (6S)-5,6,7,8-tetrahydrofolate</text>
        <dbReference type="Rhea" id="RHEA:11824"/>
        <dbReference type="ChEBI" id="CHEBI:11561"/>
        <dbReference type="ChEBI" id="CHEBI:11851"/>
        <dbReference type="ChEBI" id="CHEBI:15377"/>
        <dbReference type="ChEBI" id="CHEBI:15636"/>
        <dbReference type="ChEBI" id="CHEBI:57453"/>
        <dbReference type="EC" id="2.1.2.11"/>
    </reaction>
</comment>
<comment type="cofactor">
    <cofactor evidence="1">
        <name>Mg(2+)</name>
        <dbReference type="ChEBI" id="CHEBI:18420"/>
    </cofactor>
    <text evidence="1">Binds 1 Mg(2+) ion per subunit.</text>
</comment>
<comment type="pathway">
    <text evidence="1">Cofactor biosynthesis; (R)-pantothenate biosynthesis; (R)-pantoate from 3-methyl-2-oxobutanoate: step 1/2.</text>
</comment>
<comment type="subunit">
    <text evidence="1">Homodecamer; pentamer of dimers.</text>
</comment>
<comment type="subcellular location">
    <subcellularLocation>
        <location evidence="1">Cytoplasm</location>
    </subcellularLocation>
</comment>
<comment type="similarity">
    <text evidence="1">Belongs to the PanB family.</text>
</comment>
<organism>
    <name type="scientific">Staphylococcus aureus (strain JH1)</name>
    <dbReference type="NCBI Taxonomy" id="359787"/>
    <lineage>
        <taxon>Bacteria</taxon>
        <taxon>Bacillati</taxon>
        <taxon>Bacillota</taxon>
        <taxon>Bacilli</taxon>
        <taxon>Bacillales</taxon>
        <taxon>Staphylococcaceae</taxon>
        <taxon>Staphylococcus</taxon>
    </lineage>
</organism>
<dbReference type="EC" id="2.1.2.11" evidence="1"/>
<dbReference type="EMBL" id="CP000736">
    <property type="protein sequence ID" value="ABR53497.1"/>
    <property type="molecule type" value="Genomic_DNA"/>
</dbReference>
<dbReference type="SMR" id="A6U4X9"/>
<dbReference type="KEGG" id="sah:SaurJH1_2675"/>
<dbReference type="HOGENOM" id="CLU_036645_1_0_9"/>
<dbReference type="UniPathway" id="UPA00028">
    <property type="reaction ID" value="UER00003"/>
</dbReference>
<dbReference type="GO" id="GO:0005737">
    <property type="term" value="C:cytoplasm"/>
    <property type="evidence" value="ECO:0007669"/>
    <property type="project" value="UniProtKB-SubCell"/>
</dbReference>
<dbReference type="GO" id="GO:0003864">
    <property type="term" value="F:3-methyl-2-oxobutanoate hydroxymethyltransferase activity"/>
    <property type="evidence" value="ECO:0007669"/>
    <property type="project" value="UniProtKB-UniRule"/>
</dbReference>
<dbReference type="GO" id="GO:0000287">
    <property type="term" value="F:magnesium ion binding"/>
    <property type="evidence" value="ECO:0007669"/>
    <property type="project" value="TreeGrafter"/>
</dbReference>
<dbReference type="GO" id="GO:0015940">
    <property type="term" value="P:pantothenate biosynthetic process"/>
    <property type="evidence" value="ECO:0007669"/>
    <property type="project" value="UniProtKB-UniRule"/>
</dbReference>
<dbReference type="CDD" id="cd06557">
    <property type="entry name" value="KPHMT-like"/>
    <property type="match status" value="1"/>
</dbReference>
<dbReference type="FunFam" id="3.20.20.60:FF:000030">
    <property type="entry name" value="3-methyl-2-oxobutanoate hydroxymethyltransferase"/>
    <property type="match status" value="1"/>
</dbReference>
<dbReference type="Gene3D" id="3.20.20.60">
    <property type="entry name" value="Phosphoenolpyruvate-binding domains"/>
    <property type="match status" value="1"/>
</dbReference>
<dbReference type="HAMAP" id="MF_00156">
    <property type="entry name" value="PanB"/>
    <property type="match status" value="1"/>
</dbReference>
<dbReference type="InterPro" id="IPR003700">
    <property type="entry name" value="Pantoate_hydroxy_MeTrfase"/>
</dbReference>
<dbReference type="InterPro" id="IPR015813">
    <property type="entry name" value="Pyrv/PenolPyrv_kinase-like_dom"/>
</dbReference>
<dbReference type="InterPro" id="IPR040442">
    <property type="entry name" value="Pyrv_kinase-like_dom_sf"/>
</dbReference>
<dbReference type="NCBIfam" id="TIGR00222">
    <property type="entry name" value="panB"/>
    <property type="match status" value="1"/>
</dbReference>
<dbReference type="NCBIfam" id="NF001452">
    <property type="entry name" value="PRK00311.1"/>
    <property type="match status" value="1"/>
</dbReference>
<dbReference type="PANTHER" id="PTHR20881">
    <property type="entry name" value="3-METHYL-2-OXOBUTANOATE HYDROXYMETHYLTRANSFERASE"/>
    <property type="match status" value="1"/>
</dbReference>
<dbReference type="PANTHER" id="PTHR20881:SF0">
    <property type="entry name" value="3-METHYL-2-OXOBUTANOATE HYDROXYMETHYLTRANSFERASE"/>
    <property type="match status" value="1"/>
</dbReference>
<dbReference type="Pfam" id="PF02548">
    <property type="entry name" value="Pantoate_transf"/>
    <property type="match status" value="1"/>
</dbReference>
<dbReference type="PIRSF" id="PIRSF000388">
    <property type="entry name" value="Pantoate_hydroxy_MeTrfase"/>
    <property type="match status" value="1"/>
</dbReference>
<dbReference type="SUPFAM" id="SSF51621">
    <property type="entry name" value="Phosphoenolpyruvate/pyruvate domain"/>
    <property type="match status" value="1"/>
</dbReference>
<reference key="1">
    <citation type="submission" date="2007-06" db="EMBL/GenBank/DDBJ databases">
        <title>Complete sequence of chromosome of Staphylococcus aureus subsp. aureus JH1.</title>
        <authorList>
            <consortium name="US DOE Joint Genome Institute"/>
            <person name="Copeland A."/>
            <person name="Lucas S."/>
            <person name="Lapidus A."/>
            <person name="Barry K."/>
            <person name="Detter J.C."/>
            <person name="Glavina del Rio T."/>
            <person name="Hammon N."/>
            <person name="Israni S."/>
            <person name="Dalin E."/>
            <person name="Tice H."/>
            <person name="Pitluck S."/>
            <person name="Chain P."/>
            <person name="Malfatti S."/>
            <person name="Shin M."/>
            <person name="Vergez L."/>
            <person name="Schmutz J."/>
            <person name="Larimer F."/>
            <person name="Land M."/>
            <person name="Hauser L."/>
            <person name="Kyrpides N."/>
            <person name="Ivanova N."/>
            <person name="Tomasz A."/>
            <person name="Richardson P."/>
        </authorList>
    </citation>
    <scope>NUCLEOTIDE SEQUENCE [LARGE SCALE GENOMIC DNA]</scope>
    <source>
        <strain>JH1</strain>
    </source>
</reference>
<name>PANB_STAA2</name>
<feature type="chain" id="PRO_1000076834" description="3-methyl-2-oxobutanoate hydroxymethyltransferase">
    <location>
        <begin position="1"/>
        <end position="272"/>
    </location>
</feature>
<feature type="active site" description="Proton acceptor" evidence="1">
    <location>
        <position position="179"/>
    </location>
</feature>
<feature type="binding site" evidence="1">
    <location>
        <begin position="43"/>
        <end position="44"/>
    </location>
    <ligand>
        <name>3-methyl-2-oxobutanoate</name>
        <dbReference type="ChEBI" id="CHEBI:11851"/>
    </ligand>
</feature>
<feature type="binding site" evidence="1">
    <location>
        <position position="43"/>
    </location>
    <ligand>
        <name>Mg(2+)</name>
        <dbReference type="ChEBI" id="CHEBI:18420"/>
    </ligand>
</feature>
<feature type="binding site" evidence="1">
    <location>
        <position position="82"/>
    </location>
    <ligand>
        <name>3-methyl-2-oxobutanoate</name>
        <dbReference type="ChEBI" id="CHEBI:11851"/>
    </ligand>
</feature>
<feature type="binding site" evidence="1">
    <location>
        <position position="82"/>
    </location>
    <ligand>
        <name>Mg(2+)</name>
        <dbReference type="ChEBI" id="CHEBI:18420"/>
    </ligand>
</feature>
<feature type="binding site" evidence="1">
    <location>
        <position position="112"/>
    </location>
    <ligand>
        <name>3-methyl-2-oxobutanoate</name>
        <dbReference type="ChEBI" id="CHEBI:11851"/>
    </ligand>
</feature>
<feature type="binding site" evidence="1">
    <location>
        <position position="114"/>
    </location>
    <ligand>
        <name>Mg(2+)</name>
        <dbReference type="ChEBI" id="CHEBI:18420"/>
    </ligand>
</feature>
<proteinExistence type="inferred from homology"/>
<gene>
    <name evidence="1" type="primary">panB</name>
    <name type="ordered locus">SaurJH1_2675</name>
</gene>
<keyword id="KW-0963">Cytoplasm</keyword>
<keyword id="KW-0460">Magnesium</keyword>
<keyword id="KW-0479">Metal-binding</keyword>
<keyword id="KW-0566">Pantothenate biosynthesis</keyword>
<keyword id="KW-0808">Transferase</keyword>
<evidence type="ECO:0000255" key="1">
    <source>
        <dbReference type="HAMAP-Rule" id="MF_00156"/>
    </source>
</evidence>
<protein>
    <recommendedName>
        <fullName evidence="1">3-methyl-2-oxobutanoate hydroxymethyltransferase</fullName>
        <ecNumber evidence="1">2.1.2.11</ecNumber>
    </recommendedName>
    <alternativeName>
        <fullName evidence="1">Ketopantoate hydroxymethyltransferase</fullName>
        <shortName evidence="1">KPHMT</shortName>
    </alternativeName>
</protein>
<accession>A6U4X9</accession>